<gene>
    <name type="ordered locus">RP756</name>
</gene>
<organism>
    <name type="scientific">Rickettsia prowazekii (strain Madrid E)</name>
    <dbReference type="NCBI Taxonomy" id="272947"/>
    <lineage>
        <taxon>Bacteria</taxon>
        <taxon>Pseudomonadati</taxon>
        <taxon>Pseudomonadota</taxon>
        <taxon>Alphaproteobacteria</taxon>
        <taxon>Rickettsiales</taxon>
        <taxon>Rickettsiaceae</taxon>
        <taxon>Rickettsieae</taxon>
        <taxon>Rickettsia</taxon>
        <taxon>typhus group</taxon>
    </lineage>
</organism>
<keyword id="KW-1185">Reference proteome</keyword>
<protein>
    <recommendedName>
        <fullName>Uncharacterized protein RP756</fullName>
    </recommendedName>
</protein>
<proteinExistence type="predicted"/>
<name>Y756_RICPR</name>
<sequence length="105" mass="11797">MPIVTVTLNNKSFQLYCNNGDEEKVLSLADKLNDKIAEIKLSSPTASFDLLLVMASLNAQAEIAILTEKLYKNGFQNNNHEEEKFAETLTTIASYLENLARKMEK</sequence>
<accession>Q9ZCI4</accession>
<reference key="1">
    <citation type="journal article" date="1998" name="Nature">
        <title>The genome sequence of Rickettsia prowazekii and the origin of mitochondria.</title>
        <authorList>
            <person name="Andersson S.G.E."/>
            <person name="Zomorodipour A."/>
            <person name="Andersson J.O."/>
            <person name="Sicheritz-Ponten T."/>
            <person name="Alsmark U.C.M."/>
            <person name="Podowski R.M."/>
            <person name="Naeslund A.K."/>
            <person name="Eriksson A.-S."/>
            <person name="Winkler H.H."/>
            <person name="Kurland C.G."/>
        </authorList>
    </citation>
    <scope>NUCLEOTIDE SEQUENCE [LARGE SCALE GENOMIC DNA]</scope>
    <source>
        <strain>Madrid E</strain>
    </source>
</reference>
<feature type="chain" id="PRO_0000101415" description="Uncharacterized protein RP756">
    <location>
        <begin position="1"/>
        <end position="105"/>
    </location>
</feature>
<dbReference type="EMBL" id="AJ235273">
    <property type="protein sequence ID" value="CAA15184.1"/>
    <property type="molecule type" value="Genomic_DNA"/>
</dbReference>
<dbReference type="PIR" id="H71635">
    <property type="entry name" value="H71635"/>
</dbReference>
<dbReference type="RefSeq" id="NP_221108.1">
    <property type="nucleotide sequence ID" value="NC_000963.1"/>
</dbReference>
<dbReference type="RefSeq" id="WP_004596991.1">
    <property type="nucleotide sequence ID" value="NC_000963.1"/>
</dbReference>
<dbReference type="SMR" id="Q9ZCI4"/>
<dbReference type="STRING" id="272947.gene:17555826"/>
<dbReference type="EnsemblBacteria" id="CAA15184">
    <property type="protein sequence ID" value="CAA15184"/>
    <property type="gene ID" value="CAA15184"/>
</dbReference>
<dbReference type="KEGG" id="rpr:RP756"/>
<dbReference type="PATRIC" id="fig|272947.5.peg.790"/>
<dbReference type="eggNOG" id="COG3027">
    <property type="taxonomic scope" value="Bacteria"/>
</dbReference>
<dbReference type="HOGENOM" id="CLU_2234521_0_0_5"/>
<dbReference type="OrthoDB" id="9797575at2"/>
<dbReference type="Proteomes" id="UP000002480">
    <property type="component" value="Chromosome"/>
</dbReference>
<dbReference type="Gene3D" id="3.30.160.880">
    <property type="entry name" value="Cell division protein ZapA protomer, N-terminal domain"/>
    <property type="match status" value="1"/>
</dbReference>
<dbReference type="InterPro" id="IPR007838">
    <property type="entry name" value="Cell_div_ZapA-like"/>
</dbReference>
<dbReference type="InterPro" id="IPR036192">
    <property type="entry name" value="Cell_div_ZapA-like_sf"/>
</dbReference>
<dbReference type="InterPro" id="IPR042233">
    <property type="entry name" value="Cell_div_ZapA_N"/>
</dbReference>
<dbReference type="Pfam" id="PF05164">
    <property type="entry name" value="ZapA"/>
    <property type="match status" value="1"/>
</dbReference>
<dbReference type="SUPFAM" id="SSF102829">
    <property type="entry name" value="Cell division protein ZapA-like"/>
    <property type="match status" value="1"/>
</dbReference>